<feature type="chain" id="PRO_0000329172" description="DNA-directed RNA polymerase subunit beta">
    <location>
        <begin position="1"/>
        <end position="1375"/>
    </location>
</feature>
<sequence>MAQANSRSRNSATISYPEKRRARVNLGKREVEILKTPYLLETQIESYRKFLQKDIAAEKREDNGLHAAFKSVFPITSYSGYAVLEYVGYSLGGESTLFDVEECKLRGLTYAAPLKVNMRLVIYDKEAPAGKKAIKDIKEQEVYMGEIPLMTETGSLVINGTERVVVSQLHRSPGVFFEHDKGKTHSSGKLLYSARVIPYRGSWLDFEFDPKDCLFVRIDRRRKLPATVILRALGYDTEQILDMFYKTNHFHLNQETVTLDLIPQRLRGELAVVEIKDKKGKVIVEANRRISARHIRLIEKAEINKLELPDDYLYGKVIGKTIIDKETGEIIAHANEEITAELLKNLRATKTASLDTLYINEIECGLYVSDTLRLDTTTNQLEALVEIYRIMRPGEPPTKEAAESLFENLFFSPERYSLSAVGRMKFNRRVGRKELTGLDVLSKEDIVDVLRVLVDIRDGKGDVDDIDHLGNRRIRSVGEMAENQFRVGLVRVERAVKDRLSLADVENLMPQDLVNAKPVSAAIKEFFGSSQLSQFMDQNNPLSEITHKRRVSALGPGGLTRERAGFEVRDVHVTHYGRVCPIETPEGPNIGLINSLAVFARANEYGFLETPYRKVVDRVVTDETEYLSAIEEGDYYIAQANTNVDEKGRLVDDLISCRYKGEFTLTTPDKINYMDVSPRQIVSVAAALIPFLEHDDANRALMGSNMQRQAVPTIRPETPLVGTGMERTVAVDSGVTVIAKRSGVIDSVDASRIVVRVDRKETEDDDDIGVDIYNLTKFTRSNQNTCINQHPIVEVGDKVQKGDVLADGPSTDIGELALGQNLLVAFMPWNGYNFEDSILISERLVEEDRFTTIHIQEFTCVARDTKLGPEEITSDIPNVGESALAKLDESGIVHIGAEVNAGDILVGKVTPKGETQLTPEEKLLRAIFGEKASDVKDTSLRVTPGITGTVIGVRIFTREGVKKDERTLEIEKAELSKVEKDLNDELRVREDALFENLEKLLTGRVAAGGPNKLAKGTKITKSYLADLPRQKWFEIRLQDDAATKRLEASHEHFKELRETRDAKLKDSRQKLTQGGDLAPGVIKIVKVYLAVKRRIQPGDKMAGRHGNKGVISTIVPIEDMPYLEDGTPVDIVLNPLGVPSRMNIGQVLETHLGWATKGLGKKIGEMIEKGADAKELRKSLKPIYDLSKTQRFDLEALEDPEIVTLAKNLRKGVPISSPVFDGATEEEIKQLLKMADLPTSGQAALYDGRTGKKFDRSVTVGYMYMLKLNHLVDDKMHARSTGSYSLVTQQPLGGKAQFGGQRFGEMEVWALEAYGAAYTLQEMLTVKSDDVAGRTRMYKNIVDGDHRMDAGMPESFNVLVKEIRSLAIDIGLEND</sequence>
<protein>
    <recommendedName>
        <fullName evidence="1">DNA-directed RNA polymerase subunit beta</fullName>
        <shortName evidence="1">RNAP subunit beta</shortName>
        <ecNumber evidence="1">2.7.7.6</ecNumber>
    </recommendedName>
    <alternativeName>
        <fullName evidence="1">RNA polymerase subunit beta</fullName>
    </alternativeName>
    <alternativeName>
        <fullName evidence="1">Transcriptase subunit beta</fullName>
    </alternativeName>
</protein>
<comment type="function">
    <text evidence="1">DNA-dependent RNA polymerase catalyzes the transcription of DNA into RNA using the four ribonucleoside triphosphates as substrates.</text>
</comment>
<comment type="catalytic activity">
    <reaction evidence="1">
        <text>RNA(n) + a ribonucleoside 5'-triphosphate = RNA(n+1) + diphosphate</text>
        <dbReference type="Rhea" id="RHEA:21248"/>
        <dbReference type="Rhea" id="RHEA-COMP:14527"/>
        <dbReference type="Rhea" id="RHEA-COMP:17342"/>
        <dbReference type="ChEBI" id="CHEBI:33019"/>
        <dbReference type="ChEBI" id="CHEBI:61557"/>
        <dbReference type="ChEBI" id="CHEBI:140395"/>
        <dbReference type="EC" id="2.7.7.6"/>
    </reaction>
</comment>
<comment type="subunit">
    <text evidence="1">The RNAP catalytic core consists of 2 alpha, 1 beta, 1 beta' and 1 omega subunit. When a sigma factor is associated with the core the holoenzyme is formed, which can initiate transcription.</text>
</comment>
<comment type="similarity">
    <text evidence="1">Belongs to the RNA polymerase beta chain family.</text>
</comment>
<comment type="sequence caution" evidence="2">
    <conflict type="erroneous initiation">
        <sequence resource="EMBL-CDS" id="ABS77649"/>
    </conflict>
</comment>
<accession>A9KD39</accession>
<proteinExistence type="inferred from homology"/>
<gene>
    <name evidence="1" type="primary">rpoB</name>
    <name type="ordered locus">CBUD_1862</name>
</gene>
<organism>
    <name type="scientific">Coxiella burnetii (strain Dugway 5J108-111)</name>
    <dbReference type="NCBI Taxonomy" id="434922"/>
    <lineage>
        <taxon>Bacteria</taxon>
        <taxon>Pseudomonadati</taxon>
        <taxon>Pseudomonadota</taxon>
        <taxon>Gammaproteobacteria</taxon>
        <taxon>Legionellales</taxon>
        <taxon>Coxiellaceae</taxon>
        <taxon>Coxiella</taxon>
    </lineage>
</organism>
<keyword id="KW-0240">DNA-directed RNA polymerase</keyword>
<keyword id="KW-0548">Nucleotidyltransferase</keyword>
<keyword id="KW-0804">Transcription</keyword>
<keyword id="KW-0808">Transferase</keyword>
<evidence type="ECO:0000255" key="1">
    <source>
        <dbReference type="HAMAP-Rule" id="MF_01321"/>
    </source>
</evidence>
<evidence type="ECO:0000305" key="2"/>
<reference key="1">
    <citation type="journal article" date="2009" name="Infect. Immun.">
        <title>Comparative genomics reveal extensive transposon-mediated genomic plasticity and diversity among potential effector proteins within the genus Coxiella.</title>
        <authorList>
            <person name="Beare P.A."/>
            <person name="Unsworth N."/>
            <person name="Andoh M."/>
            <person name="Voth D.E."/>
            <person name="Omsland A."/>
            <person name="Gilk S.D."/>
            <person name="Williams K.P."/>
            <person name="Sobral B.W."/>
            <person name="Kupko J.J. III"/>
            <person name="Porcella S.F."/>
            <person name="Samuel J.E."/>
            <person name="Heinzen R.A."/>
        </authorList>
    </citation>
    <scope>NUCLEOTIDE SEQUENCE [LARGE SCALE GENOMIC DNA]</scope>
    <source>
        <strain>Dugway 5J108-111</strain>
    </source>
</reference>
<name>RPOB_COXBN</name>
<dbReference type="EC" id="2.7.7.6" evidence="1"/>
<dbReference type="EMBL" id="CP000733">
    <property type="protein sequence ID" value="ABS77649.2"/>
    <property type="status" value="ALT_INIT"/>
    <property type="molecule type" value="Genomic_DNA"/>
</dbReference>
<dbReference type="SMR" id="A9KD39"/>
<dbReference type="KEGG" id="cbd:CBUD_1862"/>
<dbReference type="HOGENOM" id="CLU_000524_4_0_6"/>
<dbReference type="Proteomes" id="UP000008555">
    <property type="component" value="Chromosome"/>
</dbReference>
<dbReference type="GO" id="GO:0000428">
    <property type="term" value="C:DNA-directed RNA polymerase complex"/>
    <property type="evidence" value="ECO:0007669"/>
    <property type="project" value="UniProtKB-KW"/>
</dbReference>
<dbReference type="GO" id="GO:0003677">
    <property type="term" value="F:DNA binding"/>
    <property type="evidence" value="ECO:0007669"/>
    <property type="project" value="UniProtKB-UniRule"/>
</dbReference>
<dbReference type="GO" id="GO:0003899">
    <property type="term" value="F:DNA-directed RNA polymerase activity"/>
    <property type="evidence" value="ECO:0007669"/>
    <property type="project" value="UniProtKB-UniRule"/>
</dbReference>
<dbReference type="GO" id="GO:0032549">
    <property type="term" value="F:ribonucleoside binding"/>
    <property type="evidence" value="ECO:0007669"/>
    <property type="project" value="InterPro"/>
</dbReference>
<dbReference type="GO" id="GO:0006351">
    <property type="term" value="P:DNA-templated transcription"/>
    <property type="evidence" value="ECO:0007669"/>
    <property type="project" value="UniProtKB-UniRule"/>
</dbReference>
<dbReference type="CDD" id="cd00653">
    <property type="entry name" value="RNA_pol_B_RPB2"/>
    <property type="match status" value="1"/>
</dbReference>
<dbReference type="FunFam" id="2.40.50.100:FF:000006">
    <property type="entry name" value="DNA-directed RNA polymerase subunit beta"/>
    <property type="match status" value="1"/>
</dbReference>
<dbReference type="FunFam" id="3.90.1110.10:FF:000001">
    <property type="entry name" value="DNA-directed RNA polymerase subunit beta"/>
    <property type="match status" value="1"/>
</dbReference>
<dbReference type="FunFam" id="3.90.1800.10:FF:000001">
    <property type="entry name" value="DNA-directed RNA polymerase subunit beta"/>
    <property type="match status" value="1"/>
</dbReference>
<dbReference type="Gene3D" id="2.40.50.100">
    <property type="match status" value="1"/>
</dbReference>
<dbReference type="Gene3D" id="2.40.50.150">
    <property type="match status" value="1"/>
</dbReference>
<dbReference type="Gene3D" id="3.90.1100.10">
    <property type="match status" value="2"/>
</dbReference>
<dbReference type="Gene3D" id="2.30.150.10">
    <property type="entry name" value="DNA-directed RNA polymerase, beta subunit, external 1 domain"/>
    <property type="match status" value="1"/>
</dbReference>
<dbReference type="Gene3D" id="2.40.270.10">
    <property type="entry name" value="DNA-directed RNA polymerase, subunit 2, domain 6"/>
    <property type="match status" value="1"/>
</dbReference>
<dbReference type="Gene3D" id="3.90.1800.10">
    <property type="entry name" value="RNA polymerase alpha subunit dimerisation domain"/>
    <property type="match status" value="1"/>
</dbReference>
<dbReference type="Gene3D" id="3.90.1110.10">
    <property type="entry name" value="RNA polymerase Rpb2, domain 2"/>
    <property type="match status" value="1"/>
</dbReference>
<dbReference type="HAMAP" id="MF_01321">
    <property type="entry name" value="RNApol_bact_RpoB"/>
    <property type="match status" value="1"/>
</dbReference>
<dbReference type="InterPro" id="IPR042107">
    <property type="entry name" value="DNA-dir_RNA_pol_bsu_ext_1_sf"/>
</dbReference>
<dbReference type="InterPro" id="IPR019462">
    <property type="entry name" value="DNA-dir_RNA_pol_bsu_external_1"/>
</dbReference>
<dbReference type="InterPro" id="IPR015712">
    <property type="entry name" value="DNA-dir_RNA_pol_su2"/>
</dbReference>
<dbReference type="InterPro" id="IPR007120">
    <property type="entry name" value="DNA-dir_RNAP_su2_dom"/>
</dbReference>
<dbReference type="InterPro" id="IPR037033">
    <property type="entry name" value="DNA-dir_RNAP_su2_hyb_sf"/>
</dbReference>
<dbReference type="InterPro" id="IPR010243">
    <property type="entry name" value="RNA_pol_bsu_bac"/>
</dbReference>
<dbReference type="InterPro" id="IPR007121">
    <property type="entry name" value="RNA_pol_bsu_CS"/>
</dbReference>
<dbReference type="InterPro" id="IPR007644">
    <property type="entry name" value="RNA_pol_bsu_protrusion"/>
</dbReference>
<dbReference type="InterPro" id="IPR007642">
    <property type="entry name" value="RNA_pol_Rpb2_2"/>
</dbReference>
<dbReference type="InterPro" id="IPR037034">
    <property type="entry name" value="RNA_pol_Rpb2_2_sf"/>
</dbReference>
<dbReference type="InterPro" id="IPR007645">
    <property type="entry name" value="RNA_pol_Rpb2_3"/>
</dbReference>
<dbReference type="InterPro" id="IPR007641">
    <property type="entry name" value="RNA_pol_Rpb2_7"/>
</dbReference>
<dbReference type="InterPro" id="IPR014724">
    <property type="entry name" value="RNA_pol_RPB2_OB-fold"/>
</dbReference>
<dbReference type="NCBIfam" id="NF001616">
    <property type="entry name" value="PRK00405.1"/>
    <property type="match status" value="1"/>
</dbReference>
<dbReference type="NCBIfam" id="TIGR02013">
    <property type="entry name" value="rpoB"/>
    <property type="match status" value="1"/>
</dbReference>
<dbReference type="PANTHER" id="PTHR20856">
    <property type="entry name" value="DNA-DIRECTED RNA POLYMERASE I SUBUNIT 2"/>
    <property type="match status" value="1"/>
</dbReference>
<dbReference type="Pfam" id="PF04563">
    <property type="entry name" value="RNA_pol_Rpb2_1"/>
    <property type="match status" value="1"/>
</dbReference>
<dbReference type="Pfam" id="PF04561">
    <property type="entry name" value="RNA_pol_Rpb2_2"/>
    <property type="match status" value="2"/>
</dbReference>
<dbReference type="Pfam" id="PF04565">
    <property type="entry name" value="RNA_pol_Rpb2_3"/>
    <property type="match status" value="1"/>
</dbReference>
<dbReference type="Pfam" id="PF10385">
    <property type="entry name" value="RNA_pol_Rpb2_45"/>
    <property type="match status" value="1"/>
</dbReference>
<dbReference type="Pfam" id="PF00562">
    <property type="entry name" value="RNA_pol_Rpb2_6"/>
    <property type="match status" value="1"/>
</dbReference>
<dbReference type="Pfam" id="PF04560">
    <property type="entry name" value="RNA_pol_Rpb2_7"/>
    <property type="match status" value="1"/>
</dbReference>
<dbReference type="SUPFAM" id="SSF64484">
    <property type="entry name" value="beta and beta-prime subunits of DNA dependent RNA-polymerase"/>
    <property type="match status" value="1"/>
</dbReference>
<dbReference type="PROSITE" id="PS01166">
    <property type="entry name" value="RNA_POL_BETA"/>
    <property type="match status" value="1"/>
</dbReference>